<evidence type="ECO:0000250" key="1">
    <source>
        <dbReference type="UniProtKB" id="P68615"/>
    </source>
</evidence>
<evidence type="ECO:0000255" key="2"/>
<evidence type="ECO:0000305" key="3"/>
<gene>
    <name type="primary">OPG160</name>
    <name type="ORF">A32L</name>
    <name type="ORF">A35L</name>
</gene>
<reference key="1">
    <citation type="journal article" date="1991" name="Dokl. Akad. Nauk SSSR">
        <title>Creation of a clone library of fragments from the natural variola virus and study of the structural and functional organization of viral genes from a circle of hosts.</title>
        <authorList>
            <person name="Shchelkunov S.N."/>
            <person name="Marennikova S.S."/>
            <person name="Totmenin A.V."/>
            <person name="Blinov V.M."/>
            <person name="Chizhikov V.E."/>
            <person name="Gutorov V.V."/>
            <person name="Safronov P.F."/>
            <person name="Pozdnyakov S.G."/>
            <person name="Shelukhina E.M."/>
            <person name="Gashnikov P.V."/>
            <person name="Anjaparidze O.G."/>
            <person name="Sandakhchiev L.S."/>
        </authorList>
    </citation>
    <scope>NUCLEOTIDE SEQUENCE [GENOMIC DNA]</scope>
</reference>
<reference key="2">
    <citation type="journal article" date="1993" name="FEBS Lett.">
        <title>Genes of variola and vaccinia viruses necessary to overcome the host protective mechanisms.</title>
        <authorList>
            <person name="Shchelkunov S.N."/>
            <person name="Blinov V.M."/>
            <person name="Sandakhchiev L.S."/>
        </authorList>
    </citation>
    <scope>NUCLEOTIDE SEQUENCE [GENOMIC DNA]</scope>
</reference>
<dbReference type="EMBL" id="X69198">
    <property type="protein sequence ID" value="CAA49080.1"/>
    <property type="molecule type" value="Genomic_DNA"/>
</dbReference>
<dbReference type="EMBL" id="X67115">
    <property type="protein sequence ID" value="CAA47506.1"/>
    <property type="molecule type" value="Genomic_DNA"/>
</dbReference>
<dbReference type="PIR" id="I36851">
    <property type="entry name" value="I36851"/>
</dbReference>
<dbReference type="RefSeq" id="NP_042183.1">
    <property type="nucleotide sequence ID" value="NC_001611.1"/>
</dbReference>
<dbReference type="GeneID" id="1486513"/>
<dbReference type="KEGG" id="vg:1486513"/>
<dbReference type="Proteomes" id="UP000002060">
    <property type="component" value="Segment"/>
</dbReference>
<dbReference type="GO" id="GO:0005524">
    <property type="term" value="F:ATP binding"/>
    <property type="evidence" value="ECO:0007669"/>
    <property type="project" value="UniProtKB-KW"/>
</dbReference>
<dbReference type="Gene3D" id="3.40.50.300">
    <property type="entry name" value="P-loop containing nucleotide triphosphate hydrolases"/>
    <property type="match status" value="1"/>
</dbReference>
<dbReference type="InterPro" id="IPR006758">
    <property type="entry name" value="A32L"/>
</dbReference>
<dbReference type="InterPro" id="IPR027417">
    <property type="entry name" value="P-loop_NTPase"/>
</dbReference>
<dbReference type="Pfam" id="PF04665">
    <property type="entry name" value="Pox_A32"/>
    <property type="match status" value="1"/>
</dbReference>
<dbReference type="SUPFAM" id="SSF52540">
    <property type="entry name" value="P-loop containing nucleoside triphosphate hydrolases"/>
    <property type="match status" value="1"/>
</dbReference>
<keyword id="KW-0067">ATP-binding</keyword>
<keyword id="KW-0547">Nucleotide-binding</keyword>
<keyword id="KW-1185">Reference proteome</keyword>
<name>PG160_VAR67</name>
<feature type="chain" id="PRO_0000099315" description="DNA packaging protein OPG160">
    <location>
        <begin position="1"/>
        <end position="270"/>
    </location>
</feature>
<feature type="binding site" evidence="2">
    <location>
        <begin position="25"/>
        <end position="32"/>
    </location>
    <ligand>
        <name>ATP</name>
        <dbReference type="ChEBI" id="CHEBI:30616"/>
    </ligand>
</feature>
<comment type="function">
    <text evidence="1">Participates in viral DNA packaging and virion morphogenesis.</text>
</comment>
<comment type="subunit">
    <text evidence="1">Interacts with protein OPG137.</text>
</comment>
<comment type="similarity">
    <text evidence="3">Belongs to the orthopoxvirus OPG160 protein family.</text>
</comment>
<organism>
    <name type="scientific">Variola virus (isolate Human/India/Ind3/1967)</name>
    <name type="common">VARV</name>
    <name type="synonym">Smallpox virus</name>
    <dbReference type="NCBI Taxonomy" id="587200"/>
    <lineage>
        <taxon>Viruses</taxon>
        <taxon>Varidnaviria</taxon>
        <taxon>Bamfordvirae</taxon>
        <taxon>Nucleocytoviricota</taxon>
        <taxon>Pokkesviricetes</taxon>
        <taxon>Chitovirales</taxon>
        <taxon>Poxviridae</taxon>
        <taxon>Chordopoxvirinae</taxon>
        <taxon>Orthopoxvirus</taxon>
        <taxon>Variola virus</taxon>
    </lineage>
</organism>
<protein>
    <recommendedName>
        <fullName>DNA packaging protein OPG160</fullName>
    </recommendedName>
</protein>
<accession>P0DTA0</accession>
<accession>P33849</accession>
<organismHost>
    <name type="scientific">Homo sapiens</name>
    <name type="common">Human</name>
    <dbReference type="NCBI Taxonomy" id="9606"/>
</organismHost>
<sequence>MNCFQEKQFLRENLLKMPFRMVLTGGSGSGKTIYLLSLFSTLVKKYKHIFLFTPVYNPDYDGYIWPNHINFVSSQESLEYNLIRTKSNIEKCITVAQNHKKSAHFLLIFDDVGDKLSKCNTLIEFLNFGRHLNTSIILLCQTYRHVPILGRANITHFCSFNISISDAENMLRSMPVKGKRKDILNMLNMIQTVRSNNRLAIIIEDSVFCEGELRICTDTADKDVIEQKLNIDILVNQYSHMKKNLNTILESTKTKLCNSDQSSSSKNVSS</sequence>
<proteinExistence type="inferred from homology"/>